<comment type="function">
    <text evidence="2">Responsible for the provision of inositol required for synthesis of phosphatidylinositol and polyphosphoinositides.</text>
</comment>
<comment type="catalytic activity">
    <reaction evidence="2">
        <text>a myo-inositol phosphate + H2O = myo-inositol + phosphate</text>
        <dbReference type="Rhea" id="RHEA:24056"/>
        <dbReference type="ChEBI" id="CHEBI:15377"/>
        <dbReference type="ChEBI" id="CHEBI:17268"/>
        <dbReference type="ChEBI" id="CHEBI:43474"/>
        <dbReference type="ChEBI" id="CHEBI:84139"/>
        <dbReference type="EC" id="3.1.3.25"/>
    </reaction>
</comment>
<comment type="cofactor">
    <cofactor evidence="2">
        <name>Mg(2+)</name>
        <dbReference type="ChEBI" id="CHEBI:18420"/>
    </cofactor>
</comment>
<comment type="pathway">
    <text>Polyol metabolism; myo-inositol biosynthesis; myo-inositol from D-glucose 6-phosphate: step 2/2.</text>
</comment>
<comment type="tissue specificity">
    <text evidence="2">Expressed in seedlings, flowers, young and matures green fruits. Detected in roots and stems.</text>
</comment>
<comment type="developmental stage">
    <text evidence="2">Expression decreases as fruits matures.</text>
</comment>
<comment type="induction">
    <text evidence="2">Up-regulated by light and down-regulated by Li(+).</text>
</comment>
<comment type="similarity">
    <text evidence="3">Belongs to the inositol monophosphatase superfamily.</text>
</comment>
<gene>
    <name type="primary">IMP1</name>
    <name type="synonym">IMP-1</name>
</gene>
<keyword id="KW-0378">Hydrolase</keyword>
<keyword id="KW-0452">Lithium</keyword>
<keyword id="KW-0460">Magnesium</keyword>
<keyword id="KW-0479">Metal-binding</keyword>
<keyword id="KW-1185">Reference proteome</keyword>
<accession>P54926</accession>
<accession>K4BPY3</accession>
<accession>Q84MJ7</accession>
<protein>
    <recommendedName>
        <fullName>Inositol monophosphatase 1</fullName>
        <shortName>IMP 1</shortName>
        <shortName>IMPase 1</shortName>
        <shortName>LeIMP1</shortName>
        <ecNumber>3.1.3.25</ecNumber>
    </recommendedName>
    <alternativeName>
        <fullName>Inositol-1(or 4)-monophosphatase 1</fullName>
    </alternativeName>
</protein>
<sequence>MARNGSLEEFLGVAVDAAKRAGEIIRKGFHETKHVVHKGQVDLVTETDKACEDLIFNHLKQHFPSHKFIGEETSAATGDFDLTDEPTWIVDPVDGTTNFVHGFPSVCVSIGLTIGKIPTVGVVYDPIIDELFTGINGKGAYLNGKPIKVSSQSELVKSLLGTEVGTTRDNLTVETTTRRINNLLFKVRSLRMCGSCALDLCWVACGRLELFYLIGYGGPWDVAGGAVIVKEAGGVLFDPSGSEFDITSQRVAATNPHLKEAFVEALQLSEYVS</sequence>
<organism>
    <name type="scientific">Solanum lycopersicum</name>
    <name type="common">Tomato</name>
    <name type="synonym">Lycopersicon esculentum</name>
    <dbReference type="NCBI Taxonomy" id="4081"/>
    <lineage>
        <taxon>Eukaryota</taxon>
        <taxon>Viridiplantae</taxon>
        <taxon>Streptophyta</taxon>
        <taxon>Embryophyta</taxon>
        <taxon>Tracheophyta</taxon>
        <taxon>Spermatophyta</taxon>
        <taxon>Magnoliopsida</taxon>
        <taxon>eudicotyledons</taxon>
        <taxon>Gunneridae</taxon>
        <taxon>Pentapetalae</taxon>
        <taxon>asterids</taxon>
        <taxon>lamiids</taxon>
        <taxon>Solanales</taxon>
        <taxon>Solanaceae</taxon>
        <taxon>Solanoideae</taxon>
        <taxon>Solaneae</taxon>
        <taxon>Solanum</taxon>
        <taxon>Solanum subgen. Lycopersicon</taxon>
    </lineage>
</organism>
<proteinExistence type="evidence at protein level"/>
<evidence type="ECO:0000250" key="1"/>
<evidence type="ECO:0000269" key="2">
    <source>
    </source>
</evidence>
<evidence type="ECO:0000305" key="3"/>
<name>IMP1_SOLLC</name>
<feature type="chain" id="PRO_0000142523" description="Inositol monophosphatase 1">
    <location>
        <begin position="1"/>
        <end position="273"/>
    </location>
</feature>
<feature type="binding site" evidence="1">
    <location>
        <position position="71"/>
    </location>
    <ligand>
        <name>Mg(2+)</name>
        <dbReference type="ChEBI" id="CHEBI:18420"/>
        <label>1</label>
    </ligand>
</feature>
<feature type="binding site" evidence="1">
    <location>
        <position position="71"/>
    </location>
    <ligand>
        <name>substrate</name>
    </ligand>
</feature>
<feature type="binding site" evidence="1">
    <location>
        <position position="91"/>
    </location>
    <ligand>
        <name>Mg(2+)</name>
        <dbReference type="ChEBI" id="CHEBI:18420"/>
        <label>1</label>
    </ligand>
</feature>
<feature type="binding site" evidence="1">
    <location>
        <position position="91"/>
    </location>
    <ligand>
        <name>Mg(2+)</name>
        <dbReference type="ChEBI" id="CHEBI:18420"/>
        <label>2</label>
    </ligand>
</feature>
<feature type="binding site" evidence="1">
    <location>
        <begin position="93"/>
        <end position="96"/>
    </location>
    <ligand>
        <name>substrate</name>
    </ligand>
</feature>
<feature type="binding site" evidence="1">
    <location>
        <position position="93"/>
    </location>
    <ligand>
        <name>Mg(2+)</name>
        <dbReference type="ChEBI" id="CHEBI:18420"/>
        <label>1</label>
    </ligand>
</feature>
<feature type="binding site" evidence="1">
    <location>
        <position position="94"/>
    </location>
    <ligand>
        <name>Mg(2+)</name>
        <dbReference type="ChEBI" id="CHEBI:18420"/>
        <label>2</label>
    </ligand>
</feature>
<feature type="binding site" evidence="1">
    <location>
        <begin position="194"/>
        <end position="196"/>
    </location>
    <ligand>
        <name>substrate</name>
    </ligand>
</feature>
<feature type="binding site" evidence="1">
    <location>
        <position position="221"/>
    </location>
    <ligand>
        <name>Mg(2+)</name>
        <dbReference type="ChEBI" id="CHEBI:18420"/>
        <label>2</label>
    </ligand>
</feature>
<feature type="binding site" evidence="1">
    <location>
        <position position="221"/>
    </location>
    <ligand>
        <name>substrate</name>
    </ligand>
</feature>
<feature type="sequence conflict" description="In Ref. 3; AEKE02000440." evidence="3" ref="3">
    <original>G</original>
    <variation>A</variation>
    <location>
        <position position="12"/>
    </location>
</feature>
<feature type="sequence conflict" description="In Ref. 2; AAP15454." evidence="3" ref="2">
    <original>H</original>
    <variation>Q</variation>
    <location>
        <position position="37"/>
    </location>
</feature>
<feature type="sequence conflict" description="In Ref. 2; AAP15454." evidence="3" ref="2">
    <original>Y</original>
    <variation>YG</variation>
    <location>
        <position position="216"/>
    </location>
</feature>
<feature type="sequence conflict" description="In Ref. 3; AEKE02000440." evidence="3" ref="3">
    <original>A</original>
    <variation>T</variation>
    <location>
        <position position="226"/>
    </location>
</feature>
<feature type="sequence conflict" description="In Ref. 2; AAP15454." evidence="3" ref="2">
    <original>A</original>
    <variation>V</variation>
    <location>
        <position position="226"/>
    </location>
</feature>
<reference key="1">
    <citation type="journal article" date="1995" name="Plant Cell">
        <title>Plant inositol monophosphatase is a lithium-sensitive enzyme encoded by a multigene family.</title>
        <authorList>
            <person name="Gillaspy G.E."/>
            <person name="Keddie J.S."/>
            <person name="Oda K."/>
            <person name="Gruissem W."/>
        </authorList>
    </citation>
    <scope>NUCLEOTIDE SEQUENCE [MRNA]</scope>
    <scope>FUNCTION</scope>
    <scope>CATALYTIC ACTIVITY</scope>
    <scope>COFACTOR</scope>
    <scope>INDUCTION BY LIGHT AND LITHIUM</scope>
    <scope>TISSUE SPECIFICITY</scope>
    <scope>DEVELOPMENTAL STAGE</scope>
    <source>
        <strain>cv. VFNT Cherry</strain>
    </source>
</reference>
<reference key="2">
    <citation type="journal article" date="2004" name="Gene">
        <title>Genomic organization and regulation of the LeIMP-1 and LeIMP-2 genes encoding myo-inositol monophosphatase in tomato.</title>
        <authorList>
            <person name="Styer J.C."/>
            <person name="Keddie J."/>
            <person name="Spence J."/>
            <person name="Gillaspy G.E."/>
        </authorList>
    </citation>
    <scope>NUCLEOTIDE SEQUENCE [GENOMIC DNA]</scope>
    <source>
        <strain>cv. Ailsa Craig</strain>
    </source>
</reference>
<reference key="3">
    <citation type="journal article" date="2012" name="Nature">
        <title>The tomato genome sequence provides insights into fleshy fruit evolution.</title>
        <authorList>
            <consortium name="Tomato Genome Consortium"/>
        </authorList>
    </citation>
    <scope>NUCLEOTIDE SEQUENCE [LARGE SCALE GENOMIC DNA]</scope>
    <source>
        <strain>cv. Heinz 1706</strain>
    </source>
</reference>
<dbReference type="EC" id="3.1.3.25"/>
<dbReference type="EMBL" id="U39444">
    <property type="protein sequence ID" value="AAB19030.1"/>
    <property type="molecule type" value="mRNA"/>
</dbReference>
<dbReference type="EMBL" id="AY227666">
    <property type="protein sequence ID" value="AAP15454.1"/>
    <property type="molecule type" value="Genomic_DNA"/>
</dbReference>
<dbReference type="EMBL" id="AEKE02000440">
    <property type="status" value="NOT_ANNOTATED_CDS"/>
    <property type="molecule type" value="Genomic_DNA"/>
</dbReference>
<dbReference type="RefSeq" id="NP_001233901.1">
    <property type="nucleotide sequence ID" value="NM_001246972.1"/>
</dbReference>
<dbReference type="SMR" id="P54926"/>
<dbReference type="FunCoup" id="P54926">
    <property type="interactions" value="1833"/>
</dbReference>
<dbReference type="STRING" id="4081.P54926"/>
<dbReference type="PaxDb" id="4081-Solyc04g014800.2.1"/>
<dbReference type="GeneID" id="544280"/>
<dbReference type="KEGG" id="sly:544280"/>
<dbReference type="eggNOG" id="KOG2951">
    <property type="taxonomic scope" value="Eukaryota"/>
</dbReference>
<dbReference type="InParanoid" id="P54926"/>
<dbReference type="OrthoDB" id="10254945at2759"/>
<dbReference type="UniPathway" id="UPA00823">
    <property type="reaction ID" value="UER00788"/>
</dbReference>
<dbReference type="Proteomes" id="UP000004994">
    <property type="component" value="Unplaced"/>
</dbReference>
<dbReference type="ExpressionAtlas" id="P54926">
    <property type="expression patterns" value="baseline and differential"/>
</dbReference>
<dbReference type="GO" id="GO:0008934">
    <property type="term" value="F:inositol monophosphate 1-phosphatase activity"/>
    <property type="evidence" value="ECO:0000318"/>
    <property type="project" value="GO_Central"/>
</dbReference>
<dbReference type="GO" id="GO:0052834">
    <property type="term" value="F:inositol monophosphate phosphatase activity"/>
    <property type="evidence" value="ECO:0000314"/>
    <property type="project" value="UniProtKB"/>
</dbReference>
<dbReference type="GO" id="GO:0000287">
    <property type="term" value="F:magnesium ion binding"/>
    <property type="evidence" value="ECO:0000314"/>
    <property type="project" value="UniProtKB"/>
</dbReference>
<dbReference type="GO" id="GO:0006021">
    <property type="term" value="P:inositol biosynthetic process"/>
    <property type="evidence" value="ECO:0000314"/>
    <property type="project" value="UniProtKB"/>
</dbReference>
<dbReference type="GO" id="GO:0006020">
    <property type="term" value="P:inositol metabolic process"/>
    <property type="evidence" value="ECO:0000318"/>
    <property type="project" value="GO_Central"/>
</dbReference>
<dbReference type="GO" id="GO:0046854">
    <property type="term" value="P:phosphatidylinositol phosphate biosynthetic process"/>
    <property type="evidence" value="ECO:0007669"/>
    <property type="project" value="InterPro"/>
</dbReference>
<dbReference type="GO" id="GO:0007165">
    <property type="term" value="P:signal transduction"/>
    <property type="evidence" value="ECO:0000318"/>
    <property type="project" value="GO_Central"/>
</dbReference>
<dbReference type="CDD" id="cd01639">
    <property type="entry name" value="IMPase"/>
    <property type="match status" value="1"/>
</dbReference>
<dbReference type="FunFam" id="3.30.540.10:FF:000004">
    <property type="entry name" value="Inositol-1-monophosphatase"/>
    <property type="match status" value="1"/>
</dbReference>
<dbReference type="FunFam" id="3.40.190.80:FF:000002">
    <property type="entry name" value="Inositol-1-monophosphatase"/>
    <property type="match status" value="1"/>
</dbReference>
<dbReference type="Gene3D" id="3.40.190.80">
    <property type="match status" value="1"/>
</dbReference>
<dbReference type="Gene3D" id="3.30.540.10">
    <property type="entry name" value="Fructose-1,6-Bisphosphatase, subunit A, domain 1"/>
    <property type="match status" value="1"/>
</dbReference>
<dbReference type="InterPro" id="IPR033942">
    <property type="entry name" value="IMPase"/>
</dbReference>
<dbReference type="InterPro" id="IPR020583">
    <property type="entry name" value="Inositol_monoP_metal-BS"/>
</dbReference>
<dbReference type="InterPro" id="IPR020552">
    <property type="entry name" value="Inositol_monoPase_Li-sen"/>
</dbReference>
<dbReference type="InterPro" id="IPR000760">
    <property type="entry name" value="Inositol_monophosphatase-like"/>
</dbReference>
<dbReference type="InterPro" id="IPR020550">
    <property type="entry name" value="Inositol_monophosphatase_CS"/>
</dbReference>
<dbReference type="PANTHER" id="PTHR20854">
    <property type="entry name" value="INOSITOL MONOPHOSPHATASE"/>
    <property type="match status" value="1"/>
</dbReference>
<dbReference type="PANTHER" id="PTHR20854:SF4">
    <property type="entry name" value="INOSITOL-1-MONOPHOSPHATASE-RELATED"/>
    <property type="match status" value="1"/>
</dbReference>
<dbReference type="Pfam" id="PF00459">
    <property type="entry name" value="Inositol_P"/>
    <property type="match status" value="1"/>
</dbReference>
<dbReference type="PRINTS" id="PR00377">
    <property type="entry name" value="IMPHPHTASES"/>
</dbReference>
<dbReference type="PRINTS" id="PR00378">
    <property type="entry name" value="LIIMPHPHTASE"/>
</dbReference>
<dbReference type="SUPFAM" id="SSF56655">
    <property type="entry name" value="Carbohydrate phosphatase"/>
    <property type="match status" value="1"/>
</dbReference>
<dbReference type="PROSITE" id="PS00629">
    <property type="entry name" value="IMP_1"/>
    <property type="match status" value="1"/>
</dbReference>
<dbReference type="PROSITE" id="PS00630">
    <property type="entry name" value="IMP_2"/>
    <property type="match status" value="1"/>
</dbReference>